<organism>
    <name type="scientific">Caenorhabditis elegans</name>
    <dbReference type="NCBI Taxonomy" id="6239"/>
    <lineage>
        <taxon>Eukaryota</taxon>
        <taxon>Metazoa</taxon>
        <taxon>Ecdysozoa</taxon>
        <taxon>Nematoda</taxon>
        <taxon>Chromadorea</taxon>
        <taxon>Rhabditida</taxon>
        <taxon>Rhabditina</taxon>
        <taxon>Rhabditomorpha</taxon>
        <taxon>Rhabditoidea</taxon>
        <taxon>Rhabditidae</taxon>
        <taxon>Peloderinae</taxon>
        <taxon>Caenorhabditis</taxon>
    </lineage>
</organism>
<reference key="1">
    <citation type="journal article" date="1998" name="Science">
        <title>Genome sequence of the nematode C. elegans: a platform for investigating biology.</title>
        <authorList>
            <consortium name="The C. elegans sequencing consortium"/>
        </authorList>
    </citation>
    <scope>NUCLEOTIDE SEQUENCE [LARGE SCALE GENOMIC DNA]</scope>
    <source>
        <strain>Bristol N2</strain>
    </source>
</reference>
<keyword id="KW-1003">Cell membrane</keyword>
<keyword id="KW-0868">Chloride</keyword>
<keyword id="KW-0869">Chloride channel</keyword>
<keyword id="KW-0407">Ion channel</keyword>
<keyword id="KW-0406">Ion transport</keyword>
<keyword id="KW-0472">Membrane</keyword>
<keyword id="KW-1185">Reference proteome</keyword>
<keyword id="KW-0812">Transmembrane</keyword>
<keyword id="KW-1133">Transmembrane helix</keyword>
<keyword id="KW-0813">Transport</keyword>
<evidence type="ECO:0000250" key="1"/>
<evidence type="ECO:0000255" key="2"/>
<evidence type="ECO:0000256" key="3">
    <source>
        <dbReference type="SAM" id="MobiDB-lite"/>
    </source>
</evidence>
<evidence type="ECO:0000305" key="4"/>
<accession>Q23369</accession>
<sequence length="499" mass="57229">MTISYTLDVSQTNLQSFFSLLLRWRGSVWKAVFGQLAVWTAVFLLISCIYRYMLSPSQQDVFEQLIRYFDNKLDANIPLTFLLGFFVSFVVARWGSILNGIGWIDDASLLFATYIRGADEETRVIRRNLVRYLVLSQALVLRDISMQVRKRFPTMDTLAASGLMTHEEMDILDHIKDPYSRYWTSIQWSLNLVYECQKKGKVDSYYLMNKIVDEIGKFRHGLASLLKYDWVPVPLVYPQVIFLAVRIYFMICLIGRQFIVTGPNPSGIDLWLPITTMVQFLVYMGWMKVAEALLNPLGEDDDDLECNYIIDKNLITGLSIVDTMWKHDDTGYSMVEEHMAKTPAQKKDEFWGIDKIAPLYSMESAERSVHPLVGSASKINLVKNKKEIVMTPHKNKLSELDPSEQKTYLRRVNVSDHNAKHAKQRGLERANSPDKCLSKMRSRSNGKFRTSANGSQNGVDLWTRAGDIEMNVATSNPNQVHPHSIAVFPPEEQQTTSRH</sequence>
<feature type="chain" id="PRO_0000143134" description="Bestrophin homolog 22">
    <location>
        <begin position="1"/>
        <end position="499"/>
    </location>
</feature>
<feature type="transmembrane region" description="Helical" evidence="2">
    <location>
        <begin position="29"/>
        <end position="49"/>
    </location>
</feature>
<feature type="transmembrane region" description="Helical" evidence="2">
    <location>
        <begin position="77"/>
        <end position="97"/>
    </location>
</feature>
<feature type="transmembrane region" description="Helical" evidence="2">
    <location>
        <begin position="235"/>
        <end position="255"/>
    </location>
</feature>
<feature type="transmembrane region" description="Helical" evidence="2">
    <location>
        <begin position="267"/>
        <end position="287"/>
    </location>
</feature>
<feature type="region of interest" description="Disordered" evidence="3">
    <location>
        <begin position="417"/>
        <end position="455"/>
    </location>
</feature>
<feature type="region of interest" description="Disordered" evidence="3">
    <location>
        <begin position="474"/>
        <end position="499"/>
    </location>
</feature>
<feature type="compositionally biased region" description="Basic and acidic residues" evidence="3">
    <location>
        <begin position="417"/>
        <end position="432"/>
    </location>
</feature>
<name>BST22_CAEEL</name>
<gene>
    <name type="primary">best-22</name>
    <name type="ORF">ZC518.1</name>
</gene>
<comment type="function">
    <text evidence="1">Forms chloride channels.</text>
</comment>
<comment type="subunit">
    <text evidence="1">Forms oligomers.</text>
</comment>
<comment type="subcellular location">
    <subcellularLocation>
        <location evidence="1">Cell membrane</location>
        <topology evidence="1">Multi-pass membrane protein</topology>
    </subcellularLocation>
</comment>
<comment type="similarity">
    <text evidence="4">Belongs to the anion channel-forming bestrophin (TC 1.A.46) family. Calcium-sensitive chloride channel subfamily.</text>
</comment>
<dbReference type="EMBL" id="Z68753">
    <property type="protein sequence ID" value="CAA92989.1"/>
    <property type="molecule type" value="Genomic_DNA"/>
</dbReference>
<dbReference type="PIR" id="T27630">
    <property type="entry name" value="T27630"/>
</dbReference>
<dbReference type="RefSeq" id="NP_502353.1">
    <property type="nucleotide sequence ID" value="NM_069952.9"/>
</dbReference>
<dbReference type="SMR" id="Q23369"/>
<dbReference type="FunCoup" id="Q23369">
    <property type="interactions" value="471"/>
</dbReference>
<dbReference type="STRING" id="6239.ZC518.1e.1"/>
<dbReference type="PaxDb" id="6239-ZC518.1a"/>
<dbReference type="EnsemblMetazoa" id="ZC518.1a.1">
    <property type="protein sequence ID" value="ZC518.1a.1"/>
    <property type="gene ID" value="WBGene00013921"/>
</dbReference>
<dbReference type="GeneID" id="191197"/>
<dbReference type="KEGG" id="cel:CELE_ZC518.1"/>
<dbReference type="UCSC" id="ZC518.1a">
    <property type="organism name" value="c. elegans"/>
</dbReference>
<dbReference type="AGR" id="WB:WBGene00013921"/>
<dbReference type="CTD" id="191197"/>
<dbReference type="WormBase" id="ZC518.1a">
    <property type="protein sequence ID" value="CE06601"/>
    <property type="gene ID" value="WBGene00013921"/>
    <property type="gene designation" value="best-22"/>
</dbReference>
<dbReference type="eggNOG" id="KOG3547">
    <property type="taxonomic scope" value="Eukaryota"/>
</dbReference>
<dbReference type="InParanoid" id="Q23369"/>
<dbReference type="OrthoDB" id="201595at2759"/>
<dbReference type="PhylomeDB" id="Q23369"/>
<dbReference type="PRO" id="PR:Q23369"/>
<dbReference type="Proteomes" id="UP000001940">
    <property type="component" value="Chromosome IV"/>
</dbReference>
<dbReference type="Bgee" id="WBGene00013921">
    <property type="expression patterns" value="Expressed in larva and 3 other cell types or tissues"/>
</dbReference>
<dbReference type="ExpressionAtlas" id="Q23369">
    <property type="expression patterns" value="baseline and differential"/>
</dbReference>
<dbReference type="GO" id="GO:0034707">
    <property type="term" value="C:chloride channel complex"/>
    <property type="evidence" value="ECO:0007669"/>
    <property type="project" value="UniProtKB-KW"/>
</dbReference>
<dbReference type="GO" id="GO:0005886">
    <property type="term" value="C:plasma membrane"/>
    <property type="evidence" value="ECO:0007669"/>
    <property type="project" value="UniProtKB-SubCell"/>
</dbReference>
<dbReference type="GO" id="GO:0005254">
    <property type="term" value="F:chloride channel activity"/>
    <property type="evidence" value="ECO:0000318"/>
    <property type="project" value="GO_Central"/>
</dbReference>
<dbReference type="InterPro" id="IPR000615">
    <property type="entry name" value="Bestrophin"/>
</dbReference>
<dbReference type="InterPro" id="IPR021134">
    <property type="entry name" value="Bestrophin-like"/>
</dbReference>
<dbReference type="PANTHER" id="PTHR10736">
    <property type="entry name" value="BESTROPHIN"/>
    <property type="match status" value="1"/>
</dbReference>
<dbReference type="PANTHER" id="PTHR10736:SF20">
    <property type="entry name" value="BESTROPHIN HOMOLOG 22"/>
    <property type="match status" value="1"/>
</dbReference>
<dbReference type="Pfam" id="PF01062">
    <property type="entry name" value="Bestrophin"/>
    <property type="match status" value="1"/>
</dbReference>
<proteinExistence type="inferred from homology"/>
<protein>
    <recommendedName>
        <fullName>Bestrophin homolog 22</fullName>
    </recommendedName>
</protein>